<reference key="1">
    <citation type="journal article" date="2006" name="Genome Biol.">
        <title>The genome of Rhizobium leguminosarum has recognizable core and accessory components.</title>
        <authorList>
            <person name="Young J.P.W."/>
            <person name="Crossman L.C."/>
            <person name="Johnston A.W.B."/>
            <person name="Thomson N.R."/>
            <person name="Ghazoui Z.F."/>
            <person name="Hull K.H."/>
            <person name="Wexler M."/>
            <person name="Curson A.R.J."/>
            <person name="Todd J.D."/>
            <person name="Poole P.S."/>
            <person name="Mauchline T.H."/>
            <person name="East A.K."/>
            <person name="Quail M.A."/>
            <person name="Churcher C."/>
            <person name="Arrowsmith C."/>
            <person name="Cherevach I."/>
            <person name="Chillingworth T."/>
            <person name="Clarke K."/>
            <person name="Cronin A."/>
            <person name="Davis P."/>
            <person name="Fraser A."/>
            <person name="Hance Z."/>
            <person name="Hauser H."/>
            <person name="Jagels K."/>
            <person name="Moule S."/>
            <person name="Mungall K."/>
            <person name="Norbertczak H."/>
            <person name="Rabbinowitsch E."/>
            <person name="Sanders M."/>
            <person name="Simmonds M."/>
            <person name="Whitehead S."/>
            <person name="Parkhill J."/>
        </authorList>
    </citation>
    <scope>NUCLEOTIDE SEQUENCE [LARGE SCALE GENOMIC DNA]</scope>
    <source>
        <strain>DSM 114642 / LMG 32736 / 3841</strain>
    </source>
</reference>
<gene>
    <name evidence="1" type="primary">clpP3</name>
    <name type="ordered locus">RL3515</name>
</gene>
<sequence length="194" mass="21581">MNDEDQDDKTKELPLGKETEANLFKSRSIFIYGPINQELAQKVCSQLVALAAASDEDIRIYVNSPGGHVESGDSIHDMIKFIKPKVWMIGTGWVASAGALIYVATPKERRLCLPNTRFLLHQPSGGTRGMASDIEIQAREIIKMNERLNRIMAAATGQPLDKIDKDTDRDYWLSAEEAKDYGLVSRIVTSQADI</sequence>
<proteinExistence type="inferred from homology"/>
<dbReference type="EC" id="3.4.21.92" evidence="1"/>
<dbReference type="EMBL" id="AM236080">
    <property type="protein sequence ID" value="CAK09003.1"/>
    <property type="molecule type" value="Genomic_DNA"/>
</dbReference>
<dbReference type="RefSeq" id="WP_003541822.1">
    <property type="nucleotide sequence ID" value="NC_008380.1"/>
</dbReference>
<dbReference type="SMR" id="Q1MDH4"/>
<dbReference type="EnsemblBacteria" id="CAK09003">
    <property type="protein sequence ID" value="CAK09003"/>
    <property type="gene ID" value="RL3515"/>
</dbReference>
<dbReference type="KEGG" id="rle:RL3515"/>
<dbReference type="eggNOG" id="COG0740">
    <property type="taxonomic scope" value="Bacteria"/>
</dbReference>
<dbReference type="HOGENOM" id="CLU_058707_4_0_5"/>
<dbReference type="Proteomes" id="UP000006575">
    <property type="component" value="Chromosome"/>
</dbReference>
<dbReference type="GO" id="GO:0005737">
    <property type="term" value="C:cytoplasm"/>
    <property type="evidence" value="ECO:0007669"/>
    <property type="project" value="UniProtKB-SubCell"/>
</dbReference>
<dbReference type="GO" id="GO:0009368">
    <property type="term" value="C:endopeptidase Clp complex"/>
    <property type="evidence" value="ECO:0007669"/>
    <property type="project" value="TreeGrafter"/>
</dbReference>
<dbReference type="GO" id="GO:0004176">
    <property type="term" value="F:ATP-dependent peptidase activity"/>
    <property type="evidence" value="ECO:0007669"/>
    <property type="project" value="InterPro"/>
</dbReference>
<dbReference type="GO" id="GO:0051117">
    <property type="term" value="F:ATPase binding"/>
    <property type="evidence" value="ECO:0007669"/>
    <property type="project" value="TreeGrafter"/>
</dbReference>
<dbReference type="GO" id="GO:0004252">
    <property type="term" value="F:serine-type endopeptidase activity"/>
    <property type="evidence" value="ECO:0007669"/>
    <property type="project" value="UniProtKB-UniRule"/>
</dbReference>
<dbReference type="GO" id="GO:0006515">
    <property type="term" value="P:protein quality control for misfolded or incompletely synthesized proteins"/>
    <property type="evidence" value="ECO:0007669"/>
    <property type="project" value="TreeGrafter"/>
</dbReference>
<dbReference type="CDD" id="cd07017">
    <property type="entry name" value="S14_ClpP_2"/>
    <property type="match status" value="1"/>
</dbReference>
<dbReference type="Gene3D" id="3.90.226.10">
    <property type="entry name" value="2-enoyl-CoA Hydratase, Chain A, domain 1"/>
    <property type="match status" value="1"/>
</dbReference>
<dbReference type="HAMAP" id="MF_00444">
    <property type="entry name" value="ClpP"/>
    <property type="match status" value="1"/>
</dbReference>
<dbReference type="InterPro" id="IPR001907">
    <property type="entry name" value="ClpP"/>
</dbReference>
<dbReference type="InterPro" id="IPR029045">
    <property type="entry name" value="ClpP/crotonase-like_dom_sf"/>
</dbReference>
<dbReference type="InterPro" id="IPR023562">
    <property type="entry name" value="ClpP/TepA"/>
</dbReference>
<dbReference type="InterPro" id="IPR033135">
    <property type="entry name" value="ClpP_His_AS"/>
</dbReference>
<dbReference type="NCBIfam" id="NF009205">
    <property type="entry name" value="PRK12553.1"/>
    <property type="match status" value="1"/>
</dbReference>
<dbReference type="PANTHER" id="PTHR10381">
    <property type="entry name" value="ATP-DEPENDENT CLP PROTEASE PROTEOLYTIC SUBUNIT"/>
    <property type="match status" value="1"/>
</dbReference>
<dbReference type="PANTHER" id="PTHR10381:SF70">
    <property type="entry name" value="ATP-DEPENDENT CLP PROTEASE PROTEOLYTIC SUBUNIT"/>
    <property type="match status" value="1"/>
</dbReference>
<dbReference type="Pfam" id="PF00574">
    <property type="entry name" value="CLP_protease"/>
    <property type="match status" value="1"/>
</dbReference>
<dbReference type="PRINTS" id="PR00127">
    <property type="entry name" value="CLPPROTEASEP"/>
</dbReference>
<dbReference type="SUPFAM" id="SSF52096">
    <property type="entry name" value="ClpP/crotonase"/>
    <property type="match status" value="1"/>
</dbReference>
<dbReference type="PROSITE" id="PS00382">
    <property type="entry name" value="CLP_PROTEASE_HIS"/>
    <property type="match status" value="1"/>
</dbReference>
<organism>
    <name type="scientific">Rhizobium johnstonii (strain DSM 114642 / LMG 32736 / 3841)</name>
    <name type="common">Rhizobium leguminosarum bv. viciae</name>
    <dbReference type="NCBI Taxonomy" id="216596"/>
    <lineage>
        <taxon>Bacteria</taxon>
        <taxon>Pseudomonadati</taxon>
        <taxon>Pseudomonadota</taxon>
        <taxon>Alphaproteobacteria</taxon>
        <taxon>Hyphomicrobiales</taxon>
        <taxon>Rhizobiaceae</taxon>
        <taxon>Rhizobium/Agrobacterium group</taxon>
        <taxon>Rhizobium</taxon>
        <taxon>Rhizobium johnstonii</taxon>
    </lineage>
</organism>
<feature type="chain" id="PRO_0000252837" description="ATP-dependent Clp protease proteolytic subunit 3">
    <location>
        <begin position="1"/>
        <end position="194"/>
    </location>
</feature>
<feature type="active site" description="Nucleophile" evidence="1">
    <location>
        <position position="96"/>
    </location>
</feature>
<feature type="active site" evidence="1">
    <location>
        <position position="121"/>
    </location>
</feature>
<keyword id="KW-0963">Cytoplasm</keyword>
<keyword id="KW-0378">Hydrolase</keyword>
<keyword id="KW-0645">Protease</keyword>
<keyword id="KW-0720">Serine protease</keyword>
<name>CLPP3_RHIJ3</name>
<evidence type="ECO:0000255" key="1">
    <source>
        <dbReference type="HAMAP-Rule" id="MF_00444"/>
    </source>
</evidence>
<protein>
    <recommendedName>
        <fullName evidence="1">ATP-dependent Clp protease proteolytic subunit 3</fullName>
        <ecNumber evidence="1">3.4.21.92</ecNumber>
    </recommendedName>
    <alternativeName>
        <fullName evidence="1">Endopeptidase Clp 3</fullName>
    </alternativeName>
</protein>
<comment type="function">
    <text evidence="1">Cleaves peptides in various proteins in a process that requires ATP hydrolysis. Has a chymotrypsin-like activity. Plays a major role in the degradation of misfolded proteins.</text>
</comment>
<comment type="catalytic activity">
    <reaction evidence="1">
        <text>Hydrolysis of proteins to small peptides in the presence of ATP and magnesium. alpha-casein is the usual test substrate. In the absence of ATP, only oligopeptides shorter than five residues are hydrolyzed (such as succinyl-Leu-Tyr-|-NHMec, and Leu-Tyr-Leu-|-Tyr-Trp, in which cleavage of the -Tyr-|-Leu- and -Tyr-|-Trp bonds also occurs).</text>
        <dbReference type="EC" id="3.4.21.92"/>
    </reaction>
</comment>
<comment type="subunit">
    <text evidence="1">Fourteen ClpP subunits assemble into 2 heptameric rings which stack back to back to give a disk-like structure with a central cavity, resembling the structure of eukaryotic proteasomes.</text>
</comment>
<comment type="subcellular location">
    <subcellularLocation>
        <location evidence="1">Cytoplasm</location>
    </subcellularLocation>
</comment>
<comment type="similarity">
    <text evidence="1">Belongs to the peptidase S14 family.</text>
</comment>
<accession>Q1MDH4</accession>